<protein>
    <recommendedName>
        <fullName evidence="1">Protein TsgA</fullName>
    </recommendedName>
</protein>
<evidence type="ECO:0000255" key="1">
    <source>
        <dbReference type="HAMAP-Rule" id="MF_01044"/>
    </source>
</evidence>
<accession>Q31VS4</accession>
<organism>
    <name type="scientific">Shigella boydii serotype 4 (strain Sb227)</name>
    <dbReference type="NCBI Taxonomy" id="300268"/>
    <lineage>
        <taxon>Bacteria</taxon>
        <taxon>Pseudomonadati</taxon>
        <taxon>Pseudomonadota</taxon>
        <taxon>Gammaproteobacteria</taxon>
        <taxon>Enterobacterales</taxon>
        <taxon>Enterobacteriaceae</taxon>
        <taxon>Shigella</taxon>
    </lineage>
</organism>
<keyword id="KW-0997">Cell inner membrane</keyword>
<keyword id="KW-1003">Cell membrane</keyword>
<keyword id="KW-0472">Membrane</keyword>
<keyword id="KW-0812">Transmembrane</keyword>
<keyword id="KW-1133">Transmembrane helix</keyword>
<feature type="chain" id="PRO_1000064252" description="Protein TsgA">
    <location>
        <begin position="1"/>
        <end position="393"/>
    </location>
</feature>
<feature type="transmembrane region" description="Helical" evidence="1">
    <location>
        <begin position="11"/>
        <end position="31"/>
    </location>
</feature>
<feature type="transmembrane region" description="Helical" evidence="1">
    <location>
        <begin position="51"/>
        <end position="71"/>
    </location>
</feature>
<feature type="transmembrane region" description="Helical" evidence="1">
    <location>
        <begin position="78"/>
        <end position="98"/>
    </location>
</feature>
<feature type="transmembrane region" description="Helical" evidence="1">
    <location>
        <begin position="101"/>
        <end position="121"/>
    </location>
</feature>
<feature type="transmembrane region" description="Helical" evidence="1">
    <location>
        <begin position="134"/>
        <end position="154"/>
    </location>
</feature>
<feature type="transmembrane region" description="Helical" evidence="1">
    <location>
        <begin position="162"/>
        <end position="182"/>
    </location>
</feature>
<feature type="transmembrane region" description="Helical" evidence="1">
    <location>
        <begin position="206"/>
        <end position="226"/>
    </location>
</feature>
<feature type="transmembrane region" description="Helical" evidence="1">
    <location>
        <begin position="245"/>
        <end position="265"/>
    </location>
</feature>
<feature type="transmembrane region" description="Helical" evidence="1">
    <location>
        <begin position="273"/>
        <end position="293"/>
    </location>
</feature>
<feature type="transmembrane region" description="Helical" evidence="1">
    <location>
        <begin position="297"/>
        <end position="317"/>
    </location>
</feature>
<feature type="transmembrane region" description="Helical" evidence="1">
    <location>
        <begin position="332"/>
        <end position="352"/>
    </location>
</feature>
<feature type="transmembrane region" description="Helical" evidence="1">
    <location>
        <begin position="361"/>
        <end position="381"/>
    </location>
</feature>
<proteinExistence type="inferred from homology"/>
<comment type="subcellular location">
    <subcellularLocation>
        <location evidence="1">Cell inner membrane</location>
        <topology evidence="1">Multi-pass membrane protein</topology>
    </subcellularLocation>
</comment>
<comment type="similarity">
    <text evidence="1">Belongs to the major facilitator superfamily. TsgA family.</text>
</comment>
<sequence length="393" mass="43210">MTNSNRIKLTWISFLSYALTGALVIVTGMVMGNIADYFNLPVSSMSNTFTFLNAGILISIFLNAWLMEIVPLKTQLRFGFLLMVLAVAGLMFSHSLALFSTAMFILGVVSGITMSIGTFLITQMYEGRQRGSRLLFTDSFFSMAGMIFPMIAAFLLARSIEWYWVYACIGLVYVAIFILTFGCEFPALGKHAPKTDAPVEKEKWGIGVLFLSVAALCYILGQLGFISWVPEYAKGLGMSLNDAGTLVSNFWMSYMVGMWAFSFILRFFDLQRILTVLAGLAAILMYVFNTGTPAHMAWSILALGFFSSAIYTTIITLGSQQTKVPSPKLVNFVLTCGTIGTMLTFVVTGPIVEHSGPQAALLTANGLYAVVFVMCFLLGFVSRHRQHNTLTSH</sequence>
<dbReference type="EMBL" id="CP000036">
    <property type="protein sequence ID" value="ABB67834.1"/>
    <property type="molecule type" value="Genomic_DNA"/>
</dbReference>
<dbReference type="RefSeq" id="WP_000185258.1">
    <property type="nucleotide sequence ID" value="NC_007613.1"/>
</dbReference>
<dbReference type="SMR" id="Q31VS4"/>
<dbReference type="GeneID" id="93778633"/>
<dbReference type="KEGG" id="sbo:SBO_3346"/>
<dbReference type="HOGENOM" id="CLU_056916_0_0_6"/>
<dbReference type="Proteomes" id="UP000007067">
    <property type="component" value="Chromosome"/>
</dbReference>
<dbReference type="GO" id="GO:0005886">
    <property type="term" value="C:plasma membrane"/>
    <property type="evidence" value="ECO:0007669"/>
    <property type="project" value="UniProtKB-SubCell"/>
</dbReference>
<dbReference type="GO" id="GO:0022857">
    <property type="term" value="F:transmembrane transporter activity"/>
    <property type="evidence" value="ECO:0007669"/>
    <property type="project" value="InterPro"/>
</dbReference>
<dbReference type="CDD" id="cd17333">
    <property type="entry name" value="MFS_FucP_MFSD4_like"/>
    <property type="match status" value="1"/>
</dbReference>
<dbReference type="FunFam" id="1.20.1250.20:FF:000032">
    <property type="entry name" value="Protein TsgA"/>
    <property type="match status" value="1"/>
</dbReference>
<dbReference type="FunFam" id="1.20.1250.20:FF:000052">
    <property type="entry name" value="Protein TsgA"/>
    <property type="match status" value="1"/>
</dbReference>
<dbReference type="Gene3D" id="1.20.1250.20">
    <property type="entry name" value="MFS general substrate transporter like domains"/>
    <property type="match status" value="2"/>
</dbReference>
<dbReference type="HAMAP" id="MF_01044">
    <property type="entry name" value="MFS_TsgA"/>
    <property type="match status" value="1"/>
</dbReference>
<dbReference type="InterPro" id="IPR011701">
    <property type="entry name" value="MFS"/>
</dbReference>
<dbReference type="InterPro" id="IPR020846">
    <property type="entry name" value="MFS_dom"/>
</dbReference>
<dbReference type="InterPro" id="IPR036259">
    <property type="entry name" value="MFS_trans_sf"/>
</dbReference>
<dbReference type="InterPro" id="IPR023528">
    <property type="entry name" value="MFS_TsgA"/>
</dbReference>
<dbReference type="InterPro" id="IPR050375">
    <property type="entry name" value="MFS_TsgA-like"/>
</dbReference>
<dbReference type="NCBIfam" id="NF002982">
    <property type="entry name" value="PRK03699.1"/>
    <property type="match status" value="1"/>
</dbReference>
<dbReference type="PANTHER" id="PTHR43702">
    <property type="entry name" value="L-FUCOSE-PROTON SYMPORTER"/>
    <property type="match status" value="1"/>
</dbReference>
<dbReference type="PANTHER" id="PTHR43702:SF3">
    <property type="entry name" value="PROTEIN TSGA"/>
    <property type="match status" value="1"/>
</dbReference>
<dbReference type="Pfam" id="PF07690">
    <property type="entry name" value="MFS_1"/>
    <property type="match status" value="1"/>
</dbReference>
<dbReference type="SUPFAM" id="SSF103473">
    <property type="entry name" value="MFS general substrate transporter"/>
    <property type="match status" value="1"/>
</dbReference>
<dbReference type="PROSITE" id="PS50850">
    <property type="entry name" value="MFS"/>
    <property type="match status" value="1"/>
</dbReference>
<reference key="1">
    <citation type="journal article" date="2005" name="Nucleic Acids Res.">
        <title>Genome dynamics and diversity of Shigella species, the etiologic agents of bacillary dysentery.</title>
        <authorList>
            <person name="Yang F."/>
            <person name="Yang J."/>
            <person name="Zhang X."/>
            <person name="Chen L."/>
            <person name="Jiang Y."/>
            <person name="Yan Y."/>
            <person name="Tang X."/>
            <person name="Wang J."/>
            <person name="Xiong Z."/>
            <person name="Dong J."/>
            <person name="Xue Y."/>
            <person name="Zhu Y."/>
            <person name="Xu X."/>
            <person name="Sun L."/>
            <person name="Chen S."/>
            <person name="Nie H."/>
            <person name="Peng J."/>
            <person name="Xu J."/>
            <person name="Wang Y."/>
            <person name="Yuan Z."/>
            <person name="Wen Y."/>
            <person name="Yao Z."/>
            <person name="Shen Y."/>
            <person name="Qiang B."/>
            <person name="Hou Y."/>
            <person name="Yu J."/>
            <person name="Jin Q."/>
        </authorList>
    </citation>
    <scope>NUCLEOTIDE SEQUENCE [LARGE SCALE GENOMIC DNA]</scope>
    <source>
        <strain>Sb227</strain>
    </source>
</reference>
<gene>
    <name evidence="1" type="primary">tsgA</name>
    <name type="ordered locus">SBO_3346</name>
</gene>
<name>TSGA_SHIBS</name>